<dbReference type="EMBL" id="AM039952">
    <property type="protein sequence ID" value="CAJ24432.1"/>
    <property type="molecule type" value="Genomic_DNA"/>
</dbReference>
<dbReference type="RefSeq" id="WP_011347875.1">
    <property type="nucleotide sequence ID" value="NZ_CP017190.1"/>
</dbReference>
<dbReference type="SMR" id="Q3BRX9"/>
<dbReference type="STRING" id="456327.BJD11_09125"/>
<dbReference type="KEGG" id="xcv:XCV2753"/>
<dbReference type="eggNOG" id="COG2924">
    <property type="taxonomic scope" value="Bacteria"/>
</dbReference>
<dbReference type="HOGENOM" id="CLU_170994_0_0_6"/>
<dbReference type="Proteomes" id="UP000007069">
    <property type="component" value="Chromosome"/>
</dbReference>
<dbReference type="GO" id="GO:0005829">
    <property type="term" value="C:cytosol"/>
    <property type="evidence" value="ECO:0007669"/>
    <property type="project" value="TreeGrafter"/>
</dbReference>
<dbReference type="GO" id="GO:0005506">
    <property type="term" value="F:iron ion binding"/>
    <property type="evidence" value="ECO:0007669"/>
    <property type="project" value="UniProtKB-UniRule"/>
</dbReference>
<dbReference type="GO" id="GO:0034599">
    <property type="term" value="P:cellular response to oxidative stress"/>
    <property type="evidence" value="ECO:0007669"/>
    <property type="project" value="TreeGrafter"/>
</dbReference>
<dbReference type="FunFam" id="1.10.3880.10:FF:000001">
    <property type="entry name" value="Probable Fe(2+)-trafficking protein"/>
    <property type="match status" value="1"/>
</dbReference>
<dbReference type="Gene3D" id="1.10.3880.10">
    <property type="entry name" value="Fe(II) trafficking protein YggX"/>
    <property type="match status" value="1"/>
</dbReference>
<dbReference type="HAMAP" id="MF_00686">
    <property type="entry name" value="Fe_traffic_YggX"/>
    <property type="match status" value="1"/>
</dbReference>
<dbReference type="InterPro" id="IPR007457">
    <property type="entry name" value="Fe_traffick_prot_YggX"/>
</dbReference>
<dbReference type="InterPro" id="IPR036766">
    <property type="entry name" value="Fe_traffick_prot_YggX_sf"/>
</dbReference>
<dbReference type="NCBIfam" id="NF003817">
    <property type="entry name" value="PRK05408.1"/>
    <property type="match status" value="1"/>
</dbReference>
<dbReference type="PANTHER" id="PTHR36965">
    <property type="entry name" value="FE(2+)-TRAFFICKING PROTEIN-RELATED"/>
    <property type="match status" value="1"/>
</dbReference>
<dbReference type="PANTHER" id="PTHR36965:SF1">
    <property type="entry name" value="FE(2+)-TRAFFICKING PROTEIN-RELATED"/>
    <property type="match status" value="1"/>
</dbReference>
<dbReference type="Pfam" id="PF04362">
    <property type="entry name" value="Iron_traffic"/>
    <property type="match status" value="1"/>
</dbReference>
<dbReference type="PIRSF" id="PIRSF029827">
    <property type="entry name" value="Fe_traffic_YggX"/>
    <property type="match status" value="1"/>
</dbReference>
<dbReference type="SUPFAM" id="SSF111148">
    <property type="entry name" value="YggX-like"/>
    <property type="match status" value="1"/>
</dbReference>
<organism>
    <name type="scientific">Xanthomonas euvesicatoria pv. vesicatoria (strain 85-10)</name>
    <name type="common">Xanthomonas campestris pv. vesicatoria</name>
    <dbReference type="NCBI Taxonomy" id="316273"/>
    <lineage>
        <taxon>Bacteria</taxon>
        <taxon>Pseudomonadati</taxon>
        <taxon>Pseudomonadota</taxon>
        <taxon>Gammaproteobacteria</taxon>
        <taxon>Lysobacterales</taxon>
        <taxon>Lysobacteraceae</taxon>
        <taxon>Xanthomonas</taxon>
    </lineage>
</organism>
<gene>
    <name type="ordered locus">XCV2753</name>
</gene>
<accession>Q3BRX9</accession>
<protein>
    <recommendedName>
        <fullName evidence="1">Probable Fe(2+)-trafficking protein</fullName>
    </recommendedName>
</protein>
<sequence>MSRTVFCHYQQSDAEGLDFVPYPGELGQRIFVQIGKTAWQAWLAHQTMLINENRLSPRDPKHRAFLEAELQKFLFERNADKPEGYVAPVRD</sequence>
<evidence type="ECO:0000255" key="1">
    <source>
        <dbReference type="HAMAP-Rule" id="MF_00686"/>
    </source>
</evidence>
<keyword id="KW-0408">Iron</keyword>
<reference key="1">
    <citation type="journal article" date="2005" name="J. Bacteriol.">
        <title>Insights into genome plasticity and pathogenicity of the plant pathogenic Bacterium Xanthomonas campestris pv. vesicatoria revealed by the complete genome sequence.</title>
        <authorList>
            <person name="Thieme F."/>
            <person name="Koebnik R."/>
            <person name="Bekel T."/>
            <person name="Berger C."/>
            <person name="Boch J."/>
            <person name="Buettner D."/>
            <person name="Caldana C."/>
            <person name="Gaigalat L."/>
            <person name="Goesmann A."/>
            <person name="Kay S."/>
            <person name="Kirchner O."/>
            <person name="Lanz C."/>
            <person name="Linke B."/>
            <person name="McHardy A.C."/>
            <person name="Meyer F."/>
            <person name="Mittenhuber G."/>
            <person name="Nies D.H."/>
            <person name="Niesbach-Kloesgen U."/>
            <person name="Patschkowski T."/>
            <person name="Rueckert C."/>
            <person name="Rupp O."/>
            <person name="Schneiker S."/>
            <person name="Schuster S.C."/>
            <person name="Vorhoelter F.J."/>
            <person name="Weber E."/>
            <person name="Puehler A."/>
            <person name="Bonas U."/>
            <person name="Bartels D."/>
            <person name="Kaiser O."/>
        </authorList>
    </citation>
    <scope>NUCLEOTIDE SEQUENCE [LARGE SCALE GENOMIC DNA]</scope>
    <source>
        <strain>85-10</strain>
    </source>
</reference>
<proteinExistence type="inferred from homology"/>
<feature type="chain" id="PRO_0000246123" description="Probable Fe(2+)-trafficking protein">
    <location>
        <begin position="1"/>
        <end position="91"/>
    </location>
</feature>
<comment type="function">
    <text evidence="1">Could be a mediator in iron transactions between iron acquisition and iron-requiring processes, such as synthesis and/or repair of Fe-S clusters in biosynthetic enzymes.</text>
</comment>
<comment type="similarity">
    <text evidence="1">Belongs to the Fe(2+)-trafficking protein family.</text>
</comment>
<name>FETP_XANE5</name>